<name>MT2_STECO</name>
<accession>P14425</accession>
<organism>
    <name type="scientific">Stenella coeruleoalba</name>
    <name type="common">Striped dolphin</name>
    <name type="synonym">Delphinus coeruleoalbus</name>
    <dbReference type="NCBI Taxonomy" id="9737"/>
    <lineage>
        <taxon>Eukaryota</taxon>
        <taxon>Metazoa</taxon>
        <taxon>Chordata</taxon>
        <taxon>Craniata</taxon>
        <taxon>Vertebrata</taxon>
        <taxon>Euteleostomi</taxon>
        <taxon>Mammalia</taxon>
        <taxon>Eutheria</taxon>
        <taxon>Laurasiatheria</taxon>
        <taxon>Artiodactyla</taxon>
        <taxon>Whippomorpha</taxon>
        <taxon>Cetacea</taxon>
        <taxon>Odontoceti</taxon>
        <taxon>Delphinidae</taxon>
        <taxon>Stenella</taxon>
    </lineage>
</organism>
<dbReference type="SMR" id="P14425"/>
<dbReference type="GO" id="GO:0005737">
    <property type="term" value="C:cytoplasm"/>
    <property type="evidence" value="ECO:0000250"/>
    <property type="project" value="UniProtKB"/>
</dbReference>
<dbReference type="GO" id="GO:0005634">
    <property type="term" value="C:nucleus"/>
    <property type="evidence" value="ECO:0000250"/>
    <property type="project" value="UniProtKB"/>
</dbReference>
<dbReference type="GO" id="GO:0008270">
    <property type="term" value="F:zinc ion binding"/>
    <property type="evidence" value="ECO:0000250"/>
    <property type="project" value="UniProtKB"/>
</dbReference>
<dbReference type="GO" id="GO:0071276">
    <property type="term" value="P:cellular response to cadmium ion"/>
    <property type="evidence" value="ECO:0007669"/>
    <property type="project" value="TreeGrafter"/>
</dbReference>
<dbReference type="GO" id="GO:0071280">
    <property type="term" value="P:cellular response to copper ion"/>
    <property type="evidence" value="ECO:0007669"/>
    <property type="project" value="TreeGrafter"/>
</dbReference>
<dbReference type="GO" id="GO:0071294">
    <property type="term" value="P:cellular response to zinc ion"/>
    <property type="evidence" value="ECO:0000250"/>
    <property type="project" value="UniProtKB"/>
</dbReference>
<dbReference type="GO" id="GO:0010273">
    <property type="term" value="P:detoxification of copper ion"/>
    <property type="evidence" value="ECO:0007669"/>
    <property type="project" value="TreeGrafter"/>
</dbReference>
<dbReference type="GO" id="GO:0006882">
    <property type="term" value="P:intracellular zinc ion homeostasis"/>
    <property type="evidence" value="ECO:0007669"/>
    <property type="project" value="TreeGrafter"/>
</dbReference>
<dbReference type="GO" id="GO:0045926">
    <property type="term" value="P:negative regulation of growth"/>
    <property type="evidence" value="ECO:0000250"/>
    <property type="project" value="UniProtKB"/>
</dbReference>
<dbReference type="FunFam" id="4.10.10.10:FF:000001">
    <property type="entry name" value="Metallothionein"/>
    <property type="match status" value="1"/>
</dbReference>
<dbReference type="Gene3D" id="4.10.10.10">
    <property type="entry name" value="Metallothionein Isoform II"/>
    <property type="match status" value="1"/>
</dbReference>
<dbReference type="InterPro" id="IPR017854">
    <property type="entry name" value="Metalthion_dom_sf"/>
</dbReference>
<dbReference type="InterPro" id="IPR023587">
    <property type="entry name" value="Metalthion_dom_sf_vert"/>
</dbReference>
<dbReference type="InterPro" id="IPR000006">
    <property type="entry name" value="Metalthion_vert"/>
</dbReference>
<dbReference type="InterPro" id="IPR018064">
    <property type="entry name" value="Metalthion_vert_metal_BS"/>
</dbReference>
<dbReference type="PANTHER" id="PTHR23299">
    <property type="entry name" value="METALLOTHIONEIN"/>
    <property type="match status" value="1"/>
</dbReference>
<dbReference type="PANTHER" id="PTHR23299:SF22">
    <property type="entry name" value="METALLOTHIONEIN-1G"/>
    <property type="match status" value="1"/>
</dbReference>
<dbReference type="Pfam" id="PF00131">
    <property type="entry name" value="Metallothio"/>
    <property type="match status" value="1"/>
</dbReference>
<dbReference type="PRINTS" id="PR00860">
    <property type="entry name" value="MTVERTEBRATE"/>
</dbReference>
<dbReference type="SUPFAM" id="SSF57868">
    <property type="entry name" value="Metallothionein"/>
    <property type="match status" value="1"/>
</dbReference>
<dbReference type="PROSITE" id="PS00203">
    <property type="entry name" value="METALLOTHIONEIN_VRT"/>
    <property type="match status" value="1"/>
</dbReference>
<keyword id="KW-0007">Acetylation</keyword>
<keyword id="KW-0903">Direct protein sequencing</keyword>
<keyword id="KW-0479">Metal-binding</keyword>
<keyword id="KW-0480">Metal-thiolate cluster</keyword>
<keyword id="KW-0597">Phosphoprotein</keyword>
<keyword id="KW-0862">Zinc</keyword>
<gene>
    <name type="primary">MT2</name>
</gene>
<evidence type="ECO:0000250" key="1">
    <source>
        <dbReference type="UniProtKB" id="P02795"/>
    </source>
</evidence>
<evidence type="ECO:0000250" key="2">
    <source>
        <dbReference type="UniProtKB" id="P68301"/>
    </source>
</evidence>
<evidence type="ECO:0000305" key="3"/>
<reference key="1">
    <citation type="journal article" date="1988" name="Agric. Biol. Chem.">
        <title>Primary structure of striped dolphin renal metallothionein II.</title>
        <authorList>
            <person name="Kwohn Y.-T."/>
            <person name="Okubo A."/>
            <person name="Hirano H."/>
            <person name="Kagawa H."/>
            <person name="Yamazaki S."/>
            <person name="Toda S."/>
        </authorList>
    </citation>
    <scope>PROTEIN SEQUENCE</scope>
    <source>
        <tissue>Kidney</tissue>
    </source>
</reference>
<protein>
    <recommendedName>
        <fullName>Metallothionein-2</fullName>
        <shortName>MT-2</shortName>
    </recommendedName>
    <alternativeName>
        <fullName>Metallothionein-II</fullName>
        <shortName>MT-II</shortName>
    </alternativeName>
</protein>
<comment type="function">
    <text>Metallothioneins have a high content of cysteine residues that bind various heavy metals; these proteins are transcriptionally regulated by both heavy metals and glucocorticoids.</text>
</comment>
<comment type="domain">
    <text>Class I metallothioneins contain 2 metal-binding domains: four divalent ions are chelated within cluster A of the alpha domain and are coordinated via cysteinyl thiolate bridges to 11 cysteine ligands. Cluster B, the corresponding region within the beta domain, can ligate three divalent ions to 9 cysteines.</text>
</comment>
<comment type="similarity">
    <text evidence="3">Belongs to the metallothionein superfamily. Type 1 family.</text>
</comment>
<sequence length="61" mass="6010">MDPNCSCTAGGSCACPGSCKCKECKCTSCKKSCCSCCPVGCAKCAQGCICKGASDKCSCCA</sequence>
<proteinExistence type="evidence at protein level"/>
<feature type="chain" id="PRO_0000197231" description="Metallothionein-2">
    <location>
        <begin position="1"/>
        <end position="61"/>
    </location>
</feature>
<feature type="region of interest" description="Beta">
    <location>
        <begin position="1"/>
        <end position="29"/>
    </location>
</feature>
<feature type="region of interest" description="Alpha">
    <location>
        <begin position="30"/>
        <end position="61"/>
    </location>
</feature>
<feature type="binding site" evidence="1">
    <location>
        <position position="5"/>
    </location>
    <ligand>
        <name>a divalent metal cation</name>
        <dbReference type="ChEBI" id="CHEBI:60240"/>
        <label>1</label>
        <note>in cluster B</note>
    </ligand>
</feature>
<feature type="binding site" evidence="1">
    <location>
        <position position="7"/>
    </location>
    <ligand>
        <name>a divalent metal cation</name>
        <dbReference type="ChEBI" id="CHEBI:60240"/>
        <label>1</label>
        <note>in cluster B</note>
    </ligand>
</feature>
<feature type="binding site" evidence="1">
    <location>
        <position position="7"/>
    </location>
    <ligand>
        <name>a divalent metal cation</name>
        <dbReference type="ChEBI" id="CHEBI:60240"/>
        <label>2</label>
        <note>in cluster B</note>
    </ligand>
</feature>
<feature type="binding site" evidence="1">
    <location>
        <position position="13"/>
    </location>
    <ligand>
        <name>a divalent metal cation</name>
        <dbReference type="ChEBI" id="CHEBI:60240"/>
        <label>2</label>
        <note>in cluster B</note>
    </ligand>
</feature>
<feature type="binding site" evidence="1">
    <location>
        <position position="15"/>
    </location>
    <ligand>
        <name>a divalent metal cation</name>
        <dbReference type="ChEBI" id="CHEBI:60240"/>
        <label>2</label>
        <note>in cluster B</note>
    </ligand>
</feature>
<feature type="binding site" evidence="1">
    <location>
        <position position="15"/>
    </location>
    <ligand>
        <name>a divalent metal cation</name>
        <dbReference type="ChEBI" id="CHEBI:60240"/>
        <label>3</label>
        <note>in cluster B</note>
    </ligand>
</feature>
<feature type="binding site" evidence="1">
    <location>
        <position position="19"/>
    </location>
    <ligand>
        <name>a divalent metal cation</name>
        <dbReference type="ChEBI" id="CHEBI:60240"/>
        <label>3</label>
        <note>in cluster B</note>
    </ligand>
</feature>
<feature type="binding site" evidence="1">
    <location>
        <position position="21"/>
    </location>
    <ligand>
        <name>a divalent metal cation</name>
        <dbReference type="ChEBI" id="CHEBI:60240"/>
        <label>1</label>
        <note>in cluster B</note>
    </ligand>
</feature>
<feature type="binding site" evidence="1">
    <location>
        <position position="24"/>
    </location>
    <ligand>
        <name>a divalent metal cation</name>
        <dbReference type="ChEBI" id="CHEBI:60240"/>
        <label>1</label>
        <note>in cluster B</note>
    </ligand>
</feature>
<feature type="binding site" evidence="1">
    <location>
        <position position="24"/>
    </location>
    <ligand>
        <name>a divalent metal cation</name>
        <dbReference type="ChEBI" id="CHEBI:60240"/>
        <label>3</label>
        <note>in cluster B</note>
    </ligand>
</feature>
<feature type="binding site" evidence="1">
    <location>
        <position position="26"/>
    </location>
    <ligand>
        <name>a divalent metal cation</name>
        <dbReference type="ChEBI" id="CHEBI:60240"/>
        <label>2</label>
        <note>in cluster B</note>
    </ligand>
</feature>
<feature type="binding site" evidence="1">
    <location>
        <position position="29"/>
    </location>
    <ligand>
        <name>a divalent metal cation</name>
        <dbReference type="ChEBI" id="CHEBI:60240"/>
        <label>3</label>
        <note>in cluster B</note>
    </ligand>
</feature>
<feature type="binding site" evidence="1">
    <location>
        <position position="33"/>
    </location>
    <ligand>
        <name>a divalent metal cation</name>
        <dbReference type="ChEBI" id="CHEBI:60240"/>
        <label>4</label>
        <note>in cluster A</note>
    </ligand>
</feature>
<feature type="binding site" evidence="1">
    <location>
        <position position="34"/>
    </location>
    <ligand>
        <name>a divalent metal cation</name>
        <dbReference type="ChEBI" id="CHEBI:60240"/>
        <label>4</label>
        <note>in cluster A</note>
    </ligand>
</feature>
<feature type="binding site" evidence="1">
    <location>
        <position position="34"/>
    </location>
    <ligand>
        <name>a divalent metal cation</name>
        <dbReference type="ChEBI" id="CHEBI:60240"/>
        <label>5</label>
        <note>in cluster A</note>
    </ligand>
</feature>
<feature type="binding site" evidence="1">
    <location>
        <position position="36"/>
    </location>
    <ligand>
        <name>a divalent metal cation</name>
        <dbReference type="ChEBI" id="CHEBI:60240"/>
        <label>5</label>
        <note>in cluster A</note>
    </ligand>
</feature>
<feature type="binding site" evidence="1">
    <location>
        <position position="37"/>
    </location>
    <ligand>
        <name>a divalent metal cation</name>
        <dbReference type="ChEBI" id="CHEBI:60240"/>
        <label>5</label>
        <note>in cluster A</note>
    </ligand>
</feature>
<feature type="binding site" evidence="1">
    <location>
        <position position="37"/>
    </location>
    <ligand>
        <name>a divalent metal cation</name>
        <dbReference type="ChEBI" id="CHEBI:60240"/>
        <label>6</label>
        <note>in cluster A</note>
    </ligand>
</feature>
<feature type="binding site" evidence="1">
    <location>
        <position position="41"/>
    </location>
    <ligand>
        <name>a divalent metal cation</name>
        <dbReference type="ChEBI" id="CHEBI:60240"/>
        <label>6</label>
        <note>in cluster A</note>
    </ligand>
</feature>
<feature type="binding site" evidence="1">
    <location>
        <position position="44"/>
    </location>
    <ligand>
        <name>a divalent metal cation</name>
        <dbReference type="ChEBI" id="CHEBI:60240"/>
        <label>4</label>
        <note>in cluster A</note>
    </ligand>
</feature>
<feature type="binding site" evidence="1">
    <location>
        <position position="44"/>
    </location>
    <ligand>
        <name>a divalent metal cation</name>
        <dbReference type="ChEBI" id="CHEBI:60240"/>
        <label>6</label>
        <note>in cluster A</note>
    </ligand>
</feature>
<feature type="binding site" evidence="1">
    <location>
        <position position="48"/>
    </location>
    <ligand>
        <name>a divalent metal cation</name>
        <dbReference type="ChEBI" id="CHEBI:60240"/>
        <label>4</label>
        <note>in cluster A</note>
    </ligand>
</feature>
<feature type="binding site" evidence="1">
    <location>
        <position position="50"/>
    </location>
    <ligand>
        <name>a divalent metal cation</name>
        <dbReference type="ChEBI" id="CHEBI:60240"/>
        <label>5</label>
        <note>in cluster A</note>
    </ligand>
</feature>
<feature type="binding site" evidence="1">
    <location>
        <position position="50"/>
    </location>
    <ligand>
        <name>a divalent metal cation</name>
        <dbReference type="ChEBI" id="CHEBI:60240"/>
        <label>7</label>
        <note>in cluster A</note>
    </ligand>
</feature>
<feature type="binding site" evidence="1">
    <location>
        <position position="57"/>
    </location>
    <ligand>
        <name>a divalent metal cation</name>
        <dbReference type="ChEBI" id="CHEBI:60240"/>
        <label>7</label>
        <note>in cluster A</note>
    </ligand>
</feature>
<feature type="binding site" evidence="1">
    <location>
        <position position="59"/>
    </location>
    <ligand>
        <name>a divalent metal cation</name>
        <dbReference type="ChEBI" id="CHEBI:60240"/>
        <label>7</label>
        <note>in cluster A</note>
    </ligand>
</feature>
<feature type="binding site" evidence="1">
    <location>
        <position position="60"/>
    </location>
    <ligand>
        <name>a divalent metal cation</name>
        <dbReference type="ChEBI" id="CHEBI:60240"/>
        <label>6</label>
        <note>in cluster A</note>
    </ligand>
</feature>
<feature type="binding site" evidence="1">
    <location>
        <position position="60"/>
    </location>
    <ligand>
        <name>a divalent metal cation</name>
        <dbReference type="ChEBI" id="CHEBI:60240"/>
        <label>7</label>
        <note>in cluster A</note>
    </ligand>
</feature>
<feature type="modified residue" description="N-acetylmethionine" evidence="2">
    <location>
        <position position="1"/>
    </location>
</feature>
<feature type="modified residue" description="Phosphoserine" evidence="1">
    <location>
        <position position="58"/>
    </location>
</feature>